<proteinExistence type="inferred from homology"/>
<accession>Q0T2A8</accession>
<protein>
    <recommendedName>
        <fullName evidence="1">Divalent metal cation transporter MntH</fullName>
    </recommendedName>
</protein>
<sequence length="412" mass="44222">MTNYRVESSSGRAARKMRLALMGPAFIAAIGYIDPGNFATNIQAGASFGYQLLWVVVWANLMAMLIQILSAKLGIATGKNLAEQIRDHYPRPVVWFYWVQAEIIAMATDLAEFIGAAIGFKLILGVSLLQGAVLTGIATFLILMLQRRGQKPLEKVIGGLLLFVAAAYIVELIFSQPNLAQLGKGMVIPSLPTSEAVFLAAGVLGATIMPHVIYLHSSLTQHLHGGSRQQRYSATKWDVAIAMTIAGFVNLVMMATAAAAFHFSGHTGVADLDEAYLTLQPLLSHAAATVFGLSLVAAGLSSTVVGTLAGQVVMQGFIRFHIPLWVRRTVTMLPSFIVILMGLDPTRILVMSQVLLSFGIALALVPLLIFTSDSKLMGDLVNSKRVKQTGWVIVVLVVALNIWLLVGTALGL</sequence>
<name>MNTH_SHIF8</name>
<comment type="function">
    <text evidence="1">H(+)-stimulated, divalent metal cation uptake system.</text>
</comment>
<comment type="subcellular location">
    <subcellularLocation>
        <location evidence="1">Cell inner membrane</location>
        <topology evidence="1">Multi-pass membrane protein</topology>
    </subcellularLocation>
</comment>
<comment type="similarity">
    <text evidence="1">Belongs to the NRAMP family.</text>
</comment>
<evidence type="ECO:0000255" key="1">
    <source>
        <dbReference type="HAMAP-Rule" id="MF_00221"/>
    </source>
</evidence>
<organism>
    <name type="scientific">Shigella flexneri serotype 5b (strain 8401)</name>
    <dbReference type="NCBI Taxonomy" id="373384"/>
    <lineage>
        <taxon>Bacteria</taxon>
        <taxon>Pseudomonadati</taxon>
        <taxon>Pseudomonadota</taxon>
        <taxon>Gammaproteobacteria</taxon>
        <taxon>Enterobacterales</taxon>
        <taxon>Enterobacteriaceae</taxon>
        <taxon>Shigella</taxon>
    </lineage>
</organism>
<keyword id="KW-0997">Cell inner membrane</keyword>
<keyword id="KW-1003">Cell membrane</keyword>
<keyword id="KW-0406">Ion transport</keyword>
<keyword id="KW-0472">Membrane</keyword>
<keyword id="KW-0769">Symport</keyword>
<keyword id="KW-0812">Transmembrane</keyword>
<keyword id="KW-1133">Transmembrane helix</keyword>
<keyword id="KW-0813">Transport</keyword>
<dbReference type="EMBL" id="CP000266">
    <property type="protein sequence ID" value="ABF04557.1"/>
    <property type="molecule type" value="Genomic_DNA"/>
</dbReference>
<dbReference type="RefSeq" id="WP_000186375.1">
    <property type="nucleotide sequence ID" value="NC_008258.1"/>
</dbReference>
<dbReference type="SMR" id="Q0T2A8"/>
<dbReference type="KEGG" id="sfv:SFV_2449"/>
<dbReference type="HOGENOM" id="CLU_020088_2_0_6"/>
<dbReference type="Proteomes" id="UP000000659">
    <property type="component" value="Chromosome"/>
</dbReference>
<dbReference type="GO" id="GO:0005886">
    <property type="term" value="C:plasma membrane"/>
    <property type="evidence" value="ECO:0007669"/>
    <property type="project" value="UniProtKB-SubCell"/>
</dbReference>
<dbReference type="GO" id="GO:0015086">
    <property type="term" value="F:cadmium ion transmembrane transporter activity"/>
    <property type="evidence" value="ECO:0007669"/>
    <property type="project" value="TreeGrafter"/>
</dbReference>
<dbReference type="GO" id="GO:0005384">
    <property type="term" value="F:manganese ion transmembrane transporter activity"/>
    <property type="evidence" value="ECO:0007669"/>
    <property type="project" value="TreeGrafter"/>
</dbReference>
<dbReference type="GO" id="GO:0046872">
    <property type="term" value="F:metal ion binding"/>
    <property type="evidence" value="ECO:0007669"/>
    <property type="project" value="UniProtKB-UniRule"/>
</dbReference>
<dbReference type="GO" id="GO:0015293">
    <property type="term" value="F:symporter activity"/>
    <property type="evidence" value="ECO:0007669"/>
    <property type="project" value="UniProtKB-UniRule"/>
</dbReference>
<dbReference type="GO" id="GO:0034755">
    <property type="term" value="P:iron ion transmembrane transport"/>
    <property type="evidence" value="ECO:0007669"/>
    <property type="project" value="TreeGrafter"/>
</dbReference>
<dbReference type="HAMAP" id="MF_00221">
    <property type="entry name" value="NRAMP"/>
    <property type="match status" value="1"/>
</dbReference>
<dbReference type="InterPro" id="IPR001046">
    <property type="entry name" value="NRAMP_fam"/>
</dbReference>
<dbReference type="NCBIfam" id="TIGR01197">
    <property type="entry name" value="nramp"/>
    <property type="match status" value="1"/>
</dbReference>
<dbReference type="NCBIfam" id="NF037982">
    <property type="entry name" value="Nramp_1"/>
    <property type="match status" value="1"/>
</dbReference>
<dbReference type="NCBIfam" id="NF001923">
    <property type="entry name" value="PRK00701.1"/>
    <property type="match status" value="1"/>
</dbReference>
<dbReference type="PANTHER" id="PTHR11706:SF33">
    <property type="entry name" value="NATURAL RESISTANCE-ASSOCIATED MACROPHAGE PROTEIN 2"/>
    <property type="match status" value="1"/>
</dbReference>
<dbReference type="PANTHER" id="PTHR11706">
    <property type="entry name" value="SOLUTE CARRIER PROTEIN FAMILY 11 MEMBER"/>
    <property type="match status" value="1"/>
</dbReference>
<dbReference type="Pfam" id="PF01566">
    <property type="entry name" value="Nramp"/>
    <property type="match status" value="1"/>
</dbReference>
<dbReference type="PRINTS" id="PR00447">
    <property type="entry name" value="NATRESASSCMP"/>
</dbReference>
<feature type="chain" id="PRO_1000024110" description="Divalent metal cation transporter MntH">
    <location>
        <begin position="1"/>
        <end position="412"/>
    </location>
</feature>
<feature type="topological domain" description="Cytoplasmic" evidence="1">
    <location>
        <begin position="1"/>
        <end position="19"/>
    </location>
</feature>
<feature type="transmembrane region" description="Helical" evidence="1">
    <location>
        <begin position="20"/>
        <end position="39"/>
    </location>
</feature>
<feature type="topological domain" description="Periplasmic" evidence="1">
    <location>
        <begin position="40"/>
        <end position="51"/>
    </location>
</feature>
<feature type="transmembrane region" description="Helical" evidence="1">
    <location>
        <begin position="52"/>
        <end position="71"/>
    </location>
</feature>
<feature type="topological domain" description="Cytoplasmic" evidence="1">
    <location>
        <begin position="72"/>
        <end position="95"/>
    </location>
</feature>
<feature type="transmembrane region" description="Helical" evidence="1">
    <location>
        <begin position="96"/>
        <end position="118"/>
    </location>
</feature>
<feature type="topological domain" description="Periplasmic" evidence="1">
    <location>
        <begin position="119"/>
        <end position="125"/>
    </location>
</feature>
<feature type="transmembrane region" description="Helical" evidence="1">
    <location>
        <begin position="126"/>
        <end position="145"/>
    </location>
</feature>
<feature type="topological domain" description="Cytoplasmic" evidence="1">
    <location>
        <begin position="146"/>
        <end position="155"/>
    </location>
</feature>
<feature type="transmembrane region" description="Helical" evidence="1">
    <location>
        <begin position="156"/>
        <end position="175"/>
    </location>
</feature>
<feature type="topological domain" description="Periplasmic" evidence="1">
    <location>
        <begin position="176"/>
        <end position="196"/>
    </location>
</feature>
<feature type="transmembrane region" description="Helical" evidence="1">
    <location>
        <begin position="197"/>
        <end position="220"/>
    </location>
</feature>
<feature type="topological domain" description="Cytoplasmic" evidence="1">
    <location>
        <begin position="221"/>
        <end position="238"/>
    </location>
</feature>
<feature type="transmembrane region" description="Helical" evidence="1">
    <location>
        <begin position="239"/>
        <end position="258"/>
    </location>
</feature>
<feature type="topological domain" description="Periplasmic" evidence="1">
    <location>
        <begin position="259"/>
        <end position="276"/>
    </location>
</feature>
<feature type="transmembrane region" description="Helical" evidence="1">
    <location>
        <begin position="277"/>
        <end position="297"/>
    </location>
</feature>
<feature type="topological domain" description="Cytoplasmic" evidence="1">
    <location>
        <begin position="298"/>
        <end position="327"/>
    </location>
</feature>
<feature type="transmembrane region" description="Helical" evidence="1">
    <location>
        <begin position="328"/>
        <end position="344"/>
    </location>
</feature>
<feature type="topological domain" description="Periplasmic" evidence="1">
    <location>
        <begin position="345"/>
        <end position="350"/>
    </location>
</feature>
<feature type="transmembrane region" description="Helical" evidence="1">
    <location>
        <begin position="351"/>
        <end position="370"/>
    </location>
</feature>
<feature type="topological domain" description="Cytoplasmic" evidence="1">
    <location>
        <begin position="371"/>
        <end position="387"/>
    </location>
</feature>
<feature type="transmembrane region" description="Helical" evidence="1">
    <location>
        <begin position="388"/>
        <end position="406"/>
    </location>
</feature>
<feature type="topological domain" description="Periplasmic" evidence="1">
    <location>
        <begin position="407"/>
        <end position="412"/>
    </location>
</feature>
<gene>
    <name evidence="1" type="primary">mntH</name>
    <name type="ordered locus">SFV_2449</name>
</gene>
<reference key="1">
    <citation type="journal article" date="2006" name="BMC Genomics">
        <title>Complete genome sequence of Shigella flexneri 5b and comparison with Shigella flexneri 2a.</title>
        <authorList>
            <person name="Nie H."/>
            <person name="Yang F."/>
            <person name="Zhang X."/>
            <person name="Yang J."/>
            <person name="Chen L."/>
            <person name="Wang J."/>
            <person name="Xiong Z."/>
            <person name="Peng J."/>
            <person name="Sun L."/>
            <person name="Dong J."/>
            <person name="Xue Y."/>
            <person name="Xu X."/>
            <person name="Chen S."/>
            <person name="Yao Z."/>
            <person name="Shen Y."/>
            <person name="Jin Q."/>
        </authorList>
    </citation>
    <scope>NUCLEOTIDE SEQUENCE [LARGE SCALE GENOMIC DNA]</scope>
    <source>
        <strain>8401</strain>
    </source>
</reference>